<gene>
    <name evidence="4 7" type="primary">atz-1</name>
    <name evidence="7" type="ORF">F28D1.2</name>
</gene>
<proteinExistence type="evidence at protein level"/>
<protein>
    <recommendedName>
        <fullName evidence="5">Protein atz-1</fullName>
    </recommendedName>
    <alternativeName>
        <fullName evidence="4 7">Abnormal transition zone 1</fullName>
    </alternativeName>
</protein>
<reference evidence="6" key="1">
    <citation type="journal article" date="1998" name="Science">
        <title>Genome sequence of the nematode C. elegans: a platform for investigating biology.</title>
        <authorList>
            <consortium name="The C. elegans sequencing consortium"/>
        </authorList>
    </citation>
    <scope>NUCLEOTIDE SEQUENCE [LARGE SCALE GENOMIC DNA]</scope>
    <source>
        <strain evidence="6">Bristol N2</strain>
    </source>
</reference>
<reference evidence="5" key="2">
    <citation type="journal article" date="2017" name="Cell Biol. Int.">
        <title>atz-1 Influences meiosis to maintain germline chromosomal stability in Caenorhabditis elegans.</title>
        <authorList>
            <person name="Dawson J.A."/>
            <person name="Methven-Kelley C."/>
            <person name="Davis G.M."/>
        </authorList>
    </citation>
    <scope>FUNCTION</scope>
    <scope>SUBCELLULAR LOCATION</scope>
    <scope>DEVELOPMENTAL STAGE</scope>
    <scope>DISRUPTION PHENOTYPE</scope>
</reference>
<comment type="function">
    <text evidence="3">Plays a role in meiosis, germline development and oocyte morphogenesis (PubMed:28696027). May play a role in DNA replication (PubMed:28696027). In the germline, involved in the maintenance of transition zone nuclei and in chromosome structure and organization, but not required for mitotic proliferation (PubMed:28696027).</text>
</comment>
<comment type="interaction">
    <interactant intactId="EBI-316637">
        <id>Q19872</id>
    </interactant>
    <interactant intactId="EBI-314126">
        <id>Q9TZK8</id>
        <label>meg-4</label>
    </interactant>
    <organismsDiffer>false</organismsDiffer>
    <experiments>3</experiments>
</comment>
<comment type="subcellular location">
    <subcellularLocation>
        <location evidence="3">Nucleus</location>
    </subcellularLocation>
</comment>
<comment type="developmental stage">
    <text evidence="3">Expressed in embryos.</text>
</comment>
<comment type="disruption phenotype">
    <text evidence="3">RNAi-mediated knockdown results in embryonic lethality in 10% of animals (PubMed:28696027). Surviving animals have a reduced brood size and abnormal diakinetic oocyte morphology (PubMed:28696027).</text>
</comment>
<accession>Q19872</accession>
<name>ATZ1_CAEEL</name>
<evidence type="ECO:0000255" key="1"/>
<evidence type="ECO:0000256" key="2">
    <source>
        <dbReference type="SAM" id="MobiDB-lite"/>
    </source>
</evidence>
<evidence type="ECO:0000269" key="3">
    <source>
    </source>
</evidence>
<evidence type="ECO:0000303" key="4">
    <source>
    </source>
</evidence>
<evidence type="ECO:0000305" key="5"/>
<evidence type="ECO:0000312" key="6">
    <source>
        <dbReference type="Proteomes" id="UP000001940"/>
    </source>
</evidence>
<evidence type="ECO:0000312" key="7">
    <source>
        <dbReference type="WormBase" id="F28D1.2"/>
    </source>
</evidence>
<sequence length="268" mass="31196">MASIELRNVQTELAAKNLQFKVLTEKFLEQRKELFDAKKTDSNVEYVECLSEKLRVATERISDLEKETKEGKQVANEEIGRLEKLLREAQQKRDAKIDESYQTFLRIELLVANLGESTDPENEKRIKNLMPAAKTGIPPEGVLRLTINALDSAARESKKKTMAIESLTKQVDDANKLTEVYMKRLEELEDKHRFEEALTLKIQAMMIETTGQLEAQKKIIADLQKKNDDLMKEEEGEEDYEEEENYEVEEDFEDEEEYDEEGEEEDYE</sequence>
<feature type="chain" id="PRO_0000453042" description="Protein atz-1">
    <location>
        <begin position="1"/>
        <end position="268"/>
    </location>
</feature>
<feature type="region of interest" description="Disordered" evidence="2">
    <location>
        <begin position="229"/>
        <end position="268"/>
    </location>
</feature>
<feature type="coiled-coil region" evidence="1">
    <location>
        <begin position="171"/>
        <end position="243"/>
    </location>
</feature>
<feature type="compositionally biased region" description="Acidic residues" evidence="2">
    <location>
        <begin position="231"/>
        <end position="268"/>
    </location>
</feature>
<organism evidence="6">
    <name type="scientific">Caenorhabditis elegans</name>
    <dbReference type="NCBI Taxonomy" id="6239"/>
    <lineage>
        <taxon>Eukaryota</taxon>
        <taxon>Metazoa</taxon>
        <taxon>Ecdysozoa</taxon>
        <taxon>Nematoda</taxon>
        <taxon>Chromadorea</taxon>
        <taxon>Rhabditida</taxon>
        <taxon>Rhabditina</taxon>
        <taxon>Rhabditomorpha</taxon>
        <taxon>Rhabditoidea</taxon>
        <taxon>Rhabditidae</taxon>
        <taxon>Peloderinae</taxon>
        <taxon>Caenorhabditis</taxon>
    </lineage>
</organism>
<keyword id="KW-0175">Coiled coil</keyword>
<keyword id="KW-0235">DNA replication</keyword>
<keyword id="KW-0469">Meiosis</keyword>
<keyword id="KW-0539">Nucleus</keyword>
<keyword id="KW-1185">Reference proteome</keyword>
<dbReference type="EMBL" id="BX284604">
    <property type="protein sequence ID" value="CAA94596.1"/>
    <property type="molecule type" value="Genomic_DNA"/>
</dbReference>
<dbReference type="PIR" id="T21492">
    <property type="entry name" value="T21492"/>
</dbReference>
<dbReference type="RefSeq" id="NP_502359.1">
    <property type="nucleotide sequence ID" value="NM_069958.6"/>
</dbReference>
<dbReference type="SMR" id="Q19872"/>
<dbReference type="DIP" id="DIP-25650N"/>
<dbReference type="FunCoup" id="Q19872">
    <property type="interactions" value="331"/>
</dbReference>
<dbReference type="IntAct" id="Q19872">
    <property type="interactions" value="18"/>
</dbReference>
<dbReference type="STRING" id="6239.F28D1.2.1"/>
<dbReference type="PaxDb" id="6239-F28D1.2"/>
<dbReference type="PeptideAtlas" id="Q19872"/>
<dbReference type="EnsemblMetazoa" id="F28D1.2.1">
    <property type="protein sequence ID" value="F28D1.2.1"/>
    <property type="gene ID" value="WBGene00009212"/>
</dbReference>
<dbReference type="GeneID" id="178186"/>
<dbReference type="KEGG" id="cel:CELE_F28D1.2"/>
<dbReference type="UCSC" id="F28D1.2">
    <property type="organism name" value="c. elegans"/>
</dbReference>
<dbReference type="AGR" id="WB:WBGene00009212"/>
<dbReference type="CTD" id="178186"/>
<dbReference type="WormBase" id="F28D1.2">
    <property type="protein sequence ID" value="CE05742"/>
    <property type="gene ID" value="WBGene00009212"/>
    <property type="gene designation" value="atz-1"/>
</dbReference>
<dbReference type="eggNOG" id="ENOG502TIV3">
    <property type="taxonomic scope" value="Eukaryota"/>
</dbReference>
<dbReference type="HOGENOM" id="CLU_928254_0_0_1"/>
<dbReference type="InParanoid" id="Q19872"/>
<dbReference type="OMA" id="ICEMSKE"/>
<dbReference type="OrthoDB" id="5839281at2759"/>
<dbReference type="PhylomeDB" id="Q19872"/>
<dbReference type="SignaLink" id="Q19872"/>
<dbReference type="PRO" id="PR:Q19872"/>
<dbReference type="Proteomes" id="UP000001940">
    <property type="component" value="Chromosome IV"/>
</dbReference>
<dbReference type="Bgee" id="WBGene00009212">
    <property type="expression patterns" value="Expressed in embryo and 3 other cell types or tissues"/>
</dbReference>
<dbReference type="GO" id="GO:0005634">
    <property type="term" value="C:nucleus"/>
    <property type="evidence" value="ECO:0000314"/>
    <property type="project" value="UniProtKB"/>
</dbReference>
<dbReference type="GO" id="GO:0006260">
    <property type="term" value="P:DNA replication"/>
    <property type="evidence" value="ECO:0007669"/>
    <property type="project" value="UniProtKB-KW"/>
</dbReference>
<dbReference type="GO" id="GO:0051321">
    <property type="term" value="P:meiotic cell cycle"/>
    <property type="evidence" value="ECO:0007669"/>
    <property type="project" value="UniProtKB-KW"/>
</dbReference>
<dbReference type="GO" id="GO:0048601">
    <property type="term" value="P:oocyte morphogenesis"/>
    <property type="evidence" value="ECO:0000315"/>
    <property type="project" value="UniProtKB"/>
</dbReference>
<dbReference type="GO" id="GO:0090727">
    <property type="term" value="P:positive regulation of brood size"/>
    <property type="evidence" value="ECO:0000315"/>
    <property type="project" value="UniProtKB"/>
</dbReference>
<dbReference type="GO" id="GO:2001252">
    <property type="term" value="P:positive regulation of chromosome organization"/>
    <property type="evidence" value="ECO:0000315"/>
    <property type="project" value="UniProtKB"/>
</dbReference>
<dbReference type="GO" id="GO:0045740">
    <property type="term" value="P:positive regulation of DNA replication"/>
    <property type="evidence" value="ECO:0000315"/>
    <property type="project" value="UniProtKB"/>
</dbReference>
<dbReference type="GO" id="GO:0045836">
    <property type="term" value="P:positive regulation of meiotic nuclear division"/>
    <property type="evidence" value="ECO:0000315"/>
    <property type="project" value="UniProtKB"/>
</dbReference>